<evidence type="ECO:0000255" key="1">
    <source>
        <dbReference type="HAMAP-Rule" id="MF_00253"/>
    </source>
</evidence>
<reference key="1">
    <citation type="journal article" date="2003" name="Microbiology">
        <title>The complete genome sequence of the avian pathogen Mycoplasma gallisepticum strain R(low).</title>
        <authorList>
            <person name="Papazisi L."/>
            <person name="Gorton T.S."/>
            <person name="Kutish G."/>
            <person name="Markham P.F."/>
            <person name="Browning G.F."/>
            <person name="Nguyen D.K."/>
            <person name="Swartzell S."/>
            <person name="Madan A."/>
            <person name="Mahairas G."/>
            <person name="Geary S.J."/>
        </authorList>
    </citation>
    <scope>NUCLEOTIDE SEQUENCE [LARGE SCALE GENOMIC DNA]</scope>
    <source>
        <strain>R(low / passage 15 / clone 2)</strain>
    </source>
</reference>
<name>SYG_MYCGA</name>
<protein>
    <recommendedName>
        <fullName evidence="1">Glycine--tRNA ligase</fullName>
        <ecNumber evidence="1">6.1.1.14</ecNumber>
    </recommendedName>
    <alternativeName>
        <fullName evidence="1">Glycyl-tRNA synthetase</fullName>
        <shortName evidence="1">GlyRS</shortName>
    </alternativeName>
</protein>
<gene>
    <name evidence="1" type="primary">glyQS</name>
    <name type="ordered locus">MYCGA3910</name>
    <name type="ORF">MGA_0015</name>
</gene>
<dbReference type="EC" id="6.1.1.14" evidence="1"/>
<dbReference type="EMBL" id="AE015450">
    <property type="protein sequence ID" value="AAP56741.2"/>
    <property type="molecule type" value="Genomic_DNA"/>
</dbReference>
<dbReference type="RefSeq" id="WP_011113637.1">
    <property type="nucleotide sequence ID" value="NC_004829.2"/>
</dbReference>
<dbReference type="SMR" id="Q7NB88"/>
<dbReference type="KEGG" id="mga:MGA_0015"/>
<dbReference type="PATRIC" id="fig|233150.7.peg.441"/>
<dbReference type="HOGENOM" id="CLU_015515_2_0_14"/>
<dbReference type="OrthoDB" id="9760853at2"/>
<dbReference type="Proteomes" id="UP000001418">
    <property type="component" value="Chromosome"/>
</dbReference>
<dbReference type="GO" id="GO:0005737">
    <property type="term" value="C:cytoplasm"/>
    <property type="evidence" value="ECO:0007669"/>
    <property type="project" value="UniProtKB-SubCell"/>
</dbReference>
<dbReference type="GO" id="GO:0005524">
    <property type="term" value="F:ATP binding"/>
    <property type="evidence" value="ECO:0007669"/>
    <property type="project" value="UniProtKB-UniRule"/>
</dbReference>
<dbReference type="GO" id="GO:0004820">
    <property type="term" value="F:glycine-tRNA ligase activity"/>
    <property type="evidence" value="ECO:0000250"/>
    <property type="project" value="UniProtKB"/>
</dbReference>
<dbReference type="GO" id="GO:0046983">
    <property type="term" value="F:protein dimerization activity"/>
    <property type="evidence" value="ECO:0000250"/>
    <property type="project" value="UniProtKB"/>
</dbReference>
<dbReference type="GO" id="GO:0006426">
    <property type="term" value="P:glycyl-tRNA aminoacylation"/>
    <property type="evidence" value="ECO:0007669"/>
    <property type="project" value="UniProtKB-UniRule"/>
</dbReference>
<dbReference type="CDD" id="cd00774">
    <property type="entry name" value="GlyRS-like_core"/>
    <property type="match status" value="1"/>
</dbReference>
<dbReference type="Gene3D" id="3.40.50.800">
    <property type="entry name" value="Anticodon-binding domain"/>
    <property type="match status" value="1"/>
</dbReference>
<dbReference type="Gene3D" id="3.30.930.10">
    <property type="entry name" value="Bira Bifunctional Protein, Domain 2"/>
    <property type="match status" value="1"/>
</dbReference>
<dbReference type="HAMAP" id="MF_00253_B">
    <property type="entry name" value="Gly_tRNA_synth_B"/>
    <property type="match status" value="1"/>
</dbReference>
<dbReference type="InterPro" id="IPR002314">
    <property type="entry name" value="aa-tRNA-synt_IIb"/>
</dbReference>
<dbReference type="InterPro" id="IPR006195">
    <property type="entry name" value="aa-tRNA-synth_II"/>
</dbReference>
<dbReference type="InterPro" id="IPR045864">
    <property type="entry name" value="aa-tRNA-synth_II/BPL/LPL"/>
</dbReference>
<dbReference type="InterPro" id="IPR004154">
    <property type="entry name" value="Anticodon-bd"/>
</dbReference>
<dbReference type="InterPro" id="IPR036621">
    <property type="entry name" value="Anticodon-bd_dom_sf"/>
</dbReference>
<dbReference type="InterPro" id="IPR027031">
    <property type="entry name" value="Gly-tRNA_synthase/POLG2"/>
</dbReference>
<dbReference type="InterPro" id="IPR022961">
    <property type="entry name" value="Gly_tRNA_ligase_bac"/>
</dbReference>
<dbReference type="InterPro" id="IPR033731">
    <property type="entry name" value="GlyRS-like_core"/>
</dbReference>
<dbReference type="InterPro" id="IPR002315">
    <property type="entry name" value="tRNA-synt_gly"/>
</dbReference>
<dbReference type="NCBIfam" id="TIGR00389">
    <property type="entry name" value="glyS_dimeric"/>
    <property type="match status" value="1"/>
</dbReference>
<dbReference type="NCBIfam" id="NF003211">
    <property type="entry name" value="PRK04173.1"/>
    <property type="match status" value="1"/>
</dbReference>
<dbReference type="PANTHER" id="PTHR10745:SF8">
    <property type="entry name" value="DNA POLYMERASE SUBUNIT GAMMA-2, MITOCHONDRIAL"/>
    <property type="match status" value="1"/>
</dbReference>
<dbReference type="PANTHER" id="PTHR10745">
    <property type="entry name" value="GLYCYL-TRNA SYNTHETASE/DNA POLYMERASE SUBUNIT GAMMA-2"/>
    <property type="match status" value="1"/>
</dbReference>
<dbReference type="Pfam" id="PF03129">
    <property type="entry name" value="HGTP_anticodon"/>
    <property type="match status" value="1"/>
</dbReference>
<dbReference type="Pfam" id="PF00587">
    <property type="entry name" value="tRNA-synt_2b"/>
    <property type="match status" value="1"/>
</dbReference>
<dbReference type="PRINTS" id="PR01043">
    <property type="entry name" value="TRNASYNTHGLY"/>
</dbReference>
<dbReference type="SUPFAM" id="SSF52954">
    <property type="entry name" value="Class II aaRS ABD-related"/>
    <property type="match status" value="1"/>
</dbReference>
<dbReference type="SUPFAM" id="SSF55681">
    <property type="entry name" value="Class II aaRS and biotin synthetases"/>
    <property type="match status" value="1"/>
</dbReference>
<dbReference type="PROSITE" id="PS50862">
    <property type="entry name" value="AA_TRNA_LIGASE_II"/>
    <property type="match status" value="1"/>
</dbReference>
<organism>
    <name type="scientific">Mycoplasmoides gallisepticum (strain R(low / passage 15 / clone 2))</name>
    <name type="common">Mycoplasma gallisepticum</name>
    <dbReference type="NCBI Taxonomy" id="710127"/>
    <lineage>
        <taxon>Bacteria</taxon>
        <taxon>Bacillati</taxon>
        <taxon>Mycoplasmatota</taxon>
        <taxon>Mycoplasmoidales</taxon>
        <taxon>Mycoplasmoidaceae</taxon>
        <taxon>Mycoplasmoides</taxon>
    </lineage>
</organism>
<feature type="chain" id="PRO_0000072963" description="Glycine--tRNA ligase">
    <location>
        <begin position="1"/>
        <end position="463"/>
    </location>
</feature>
<feature type="binding site" evidence="1">
    <location>
        <position position="98"/>
    </location>
    <ligand>
        <name>substrate</name>
    </ligand>
</feature>
<feature type="binding site" evidence="1">
    <location>
        <position position="170"/>
    </location>
    <ligand>
        <name>substrate</name>
    </ligand>
</feature>
<feature type="binding site" evidence="1">
    <location>
        <begin position="202"/>
        <end position="204"/>
    </location>
    <ligand>
        <name>ATP</name>
        <dbReference type="ChEBI" id="CHEBI:30616"/>
    </ligand>
</feature>
<feature type="binding site" evidence="1">
    <location>
        <begin position="212"/>
        <end position="217"/>
    </location>
    <ligand>
        <name>ATP</name>
        <dbReference type="ChEBI" id="CHEBI:30616"/>
    </ligand>
</feature>
<feature type="binding site" evidence="1">
    <location>
        <begin position="217"/>
        <end position="221"/>
    </location>
    <ligand>
        <name>substrate</name>
    </ligand>
</feature>
<feature type="binding site" evidence="1">
    <location>
        <begin position="287"/>
        <end position="288"/>
    </location>
    <ligand>
        <name>ATP</name>
        <dbReference type="ChEBI" id="CHEBI:30616"/>
    </ligand>
</feature>
<feature type="binding site" evidence="1">
    <location>
        <begin position="327"/>
        <end position="331"/>
    </location>
    <ligand>
        <name>substrate</name>
    </ligand>
</feature>
<feature type="binding site" evidence="1">
    <location>
        <begin position="331"/>
        <end position="334"/>
    </location>
    <ligand>
        <name>ATP</name>
        <dbReference type="ChEBI" id="CHEBI:30616"/>
    </ligand>
</feature>
<proteinExistence type="inferred from homology"/>
<accession>Q7NB88</accession>
<sequence length="463" mass="54284">MELKQDQIVNFLKNYGFVYQSSEIYNGLANSWDYGPLGALLKNNIKQLLLKHFVFSQPDMKLLDSSIILNPLVWQASGHLDNFSDPLVDCKKCKSRYRADKLIEELNDDSIKITENTDPSYLEQILVDKKVECKKCESTNWTKIRKFNLMFKTFQGVVEDSLNTIYLRPETAQGIFINFKNIVRTQRMKLPFGVAQIGKAFRNEITPGNFIFRTREFEQFEIEYFLEPELVKEKFDWYINQIEDFLINKLLINKQLIKRHEIAKDELAHYSSRTIDFQFNFPHGWSELWGLAHRGNFDLTAHSNESGKTLDYHNEIEKTKIIPDVIEPSLGIERILYAIFCAHYHVEQLADNDSREVLRLPVSLSPYQLAILPLVNKLKDQAYQLYLDLLKISDANLRFDFDSAGSIGKRYRRYDAIGAKYCLTYDFDSLEKGIVTIRERDSMEQIKIPISELRQWIRNNLHE</sequence>
<keyword id="KW-0030">Aminoacyl-tRNA synthetase</keyword>
<keyword id="KW-0067">ATP-binding</keyword>
<keyword id="KW-0963">Cytoplasm</keyword>
<keyword id="KW-0436">Ligase</keyword>
<keyword id="KW-0547">Nucleotide-binding</keyword>
<keyword id="KW-0648">Protein biosynthesis</keyword>
<keyword id="KW-1185">Reference proteome</keyword>
<comment type="function">
    <text evidence="1">Catalyzes the attachment of glycine to tRNA(Gly).</text>
</comment>
<comment type="catalytic activity">
    <reaction evidence="1">
        <text>tRNA(Gly) + glycine + ATP = glycyl-tRNA(Gly) + AMP + diphosphate</text>
        <dbReference type="Rhea" id="RHEA:16013"/>
        <dbReference type="Rhea" id="RHEA-COMP:9664"/>
        <dbReference type="Rhea" id="RHEA-COMP:9683"/>
        <dbReference type="ChEBI" id="CHEBI:30616"/>
        <dbReference type="ChEBI" id="CHEBI:33019"/>
        <dbReference type="ChEBI" id="CHEBI:57305"/>
        <dbReference type="ChEBI" id="CHEBI:78442"/>
        <dbReference type="ChEBI" id="CHEBI:78522"/>
        <dbReference type="ChEBI" id="CHEBI:456215"/>
        <dbReference type="EC" id="6.1.1.14"/>
    </reaction>
</comment>
<comment type="subunit">
    <text evidence="1">Homodimer.</text>
</comment>
<comment type="subcellular location">
    <subcellularLocation>
        <location evidence="1">Cytoplasm</location>
    </subcellularLocation>
</comment>
<comment type="similarity">
    <text evidence="1">Belongs to the class-II aminoacyl-tRNA synthetase family.</text>
</comment>